<accession>Q57566</accession>
<protein>
    <recommendedName>
        <fullName evidence="1">Flavin prenyltransferase UbiX</fullName>
        <ecNumber evidence="1">2.5.1.129</ecNumber>
    </recommendedName>
</protein>
<comment type="function">
    <text evidence="1">Flavin prenyltransferase that catalyzes the synthesis of the prenylated FMN cofactor (prenyl-FMN) for 4-hydroxy-3-polyprenylbenzoic acid decarboxylase UbiD. The prenyltransferase is metal-independent and links a dimethylallyl moiety from dimethylallyl monophosphate (DMAP) to the flavin N5 and C6 atoms of FMN.</text>
</comment>
<comment type="catalytic activity">
    <reaction evidence="1">
        <text>dimethylallyl phosphate + FMNH2 = prenylated FMNH2 + phosphate</text>
        <dbReference type="Rhea" id="RHEA:37743"/>
        <dbReference type="ChEBI" id="CHEBI:43474"/>
        <dbReference type="ChEBI" id="CHEBI:57618"/>
        <dbReference type="ChEBI" id="CHEBI:87467"/>
        <dbReference type="ChEBI" id="CHEBI:88052"/>
        <dbReference type="EC" id="2.5.1.129"/>
    </reaction>
</comment>
<comment type="similarity">
    <text evidence="1">Belongs to the UbiX/PAD1 family.</text>
</comment>
<sequence length="184" mass="20643">MKIIVCITGASGVIYAKRLLEVLKDRAEVNLIISNSAKKIIKEELDIDWKEIKKLATDYYENDDFFSPLASGSNKFDAVVVVPCSMKTLSAIANGYSANLIVRVCDIALKERRKLIIMPREMPFNSIHLENMLKLSNLGAIVMPPIPAFYNKPKNVNDIINFVVGRVLDILGIDNSLFKRWGTV</sequence>
<reference key="1">
    <citation type="journal article" date="1996" name="Science">
        <title>Complete genome sequence of the methanogenic archaeon, Methanococcus jannaschii.</title>
        <authorList>
            <person name="Bult C.J."/>
            <person name="White O."/>
            <person name="Olsen G.J."/>
            <person name="Zhou L."/>
            <person name="Fleischmann R.D."/>
            <person name="Sutton G.G."/>
            <person name="Blake J.A."/>
            <person name="FitzGerald L.M."/>
            <person name="Clayton R.A."/>
            <person name="Gocayne J.D."/>
            <person name="Kerlavage A.R."/>
            <person name="Dougherty B.A."/>
            <person name="Tomb J.-F."/>
            <person name="Adams M.D."/>
            <person name="Reich C.I."/>
            <person name="Overbeek R."/>
            <person name="Kirkness E.F."/>
            <person name="Weinstock K.G."/>
            <person name="Merrick J.M."/>
            <person name="Glodek A."/>
            <person name="Scott J.L."/>
            <person name="Geoghagen N.S.M."/>
            <person name="Weidman J.F."/>
            <person name="Fuhrmann J.L."/>
            <person name="Nguyen D."/>
            <person name="Utterback T.R."/>
            <person name="Kelley J.M."/>
            <person name="Peterson J.D."/>
            <person name="Sadow P.W."/>
            <person name="Hanna M.C."/>
            <person name="Cotton M.D."/>
            <person name="Roberts K.M."/>
            <person name="Hurst M.A."/>
            <person name="Kaine B.P."/>
            <person name="Borodovsky M."/>
            <person name="Klenk H.-P."/>
            <person name="Fraser C.M."/>
            <person name="Smith H.O."/>
            <person name="Woese C.R."/>
            <person name="Venter J.C."/>
        </authorList>
    </citation>
    <scope>NUCLEOTIDE SEQUENCE [LARGE SCALE GENOMIC DNA]</scope>
    <source>
        <strain>ATCC 43067 / DSM 2661 / JAL-1 / JCM 10045 / NBRC 100440</strain>
    </source>
</reference>
<proteinExistence type="evidence at protein level"/>
<organism>
    <name type="scientific">Methanocaldococcus jannaschii (strain ATCC 43067 / DSM 2661 / JAL-1 / JCM 10045 / NBRC 100440)</name>
    <name type="common">Methanococcus jannaschii</name>
    <dbReference type="NCBI Taxonomy" id="243232"/>
    <lineage>
        <taxon>Archaea</taxon>
        <taxon>Methanobacteriati</taxon>
        <taxon>Methanobacteriota</taxon>
        <taxon>Methanomada group</taxon>
        <taxon>Methanococci</taxon>
        <taxon>Methanococcales</taxon>
        <taxon>Methanocaldococcaceae</taxon>
        <taxon>Methanocaldococcus</taxon>
    </lineage>
</organism>
<feature type="chain" id="PRO_0000134978" description="Flavin prenyltransferase UbiX">
    <location>
        <begin position="1"/>
        <end position="184"/>
    </location>
</feature>
<feature type="binding site" evidence="1">
    <location>
        <begin position="9"/>
        <end position="11"/>
    </location>
    <ligand>
        <name>FMN</name>
        <dbReference type="ChEBI" id="CHEBI:58210"/>
    </ligand>
</feature>
<feature type="binding site" evidence="1">
    <location>
        <position position="34"/>
    </location>
    <ligand>
        <name>FMN</name>
        <dbReference type="ChEBI" id="CHEBI:58210"/>
    </ligand>
</feature>
<feature type="binding site" evidence="1">
    <location>
        <begin position="85"/>
        <end position="88"/>
    </location>
    <ligand>
        <name>FMN</name>
        <dbReference type="ChEBI" id="CHEBI:58210"/>
    </ligand>
</feature>
<feature type="binding site" evidence="1">
    <location>
        <position position="120"/>
    </location>
    <ligand>
        <name>FMN</name>
        <dbReference type="ChEBI" id="CHEBI:58210"/>
    </ligand>
</feature>
<feature type="binding site" evidence="1">
    <location>
        <position position="150"/>
    </location>
    <ligand>
        <name>dimethylallyl phosphate</name>
        <dbReference type="ChEBI" id="CHEBI:88052"/>
    </ligand>
</feature>
<feature type="binding site" evidence="1">
    <location>
        <position position="166"/>
    </location>
    <ligand>
        <name>dimethylallyl phosphate</name>
        <dbReference type="ChEBI" id="CHEBI:88052"/>
    </ligand>
</feature>
<feature type="strand" evidence="2">
    <location>
        <begin position="2"/>
        <end position="7"/>
    </location>
</feature>
<feature type="strand" evidence="2">
    <location>
        <begin position="9"/>
        <end position="11"/>
    </location>
</feature>
<feature type="helix" evidence="2">
    <location>
        <begin position="13"/>
        <end position="22"/>
    </location>
</feature>
<feature type="turn" evidence="2">
    <location>
        <begin position="23"/>
        <end position="26"/>
    </location>
</feature>
<feature type="strand" evidence="2">
    <location>
        <begin position="27"/>
        <end position="33"/>
    </location>
</feature>
<feature type="helix" evidence="2">
    <location>
        <begin position="35"/>
        <end position="45"/>
    </location>
</feature>
<feature type="helix" evidence="2">
    <location>
        <begin position="50"/>
        <end position="53"/>
    </location>
</feature>
<feature type="strand" evidence="2">
    <location>
        <begin position="56"/>
        <end position="61"/>
    </location>
</feature>
<feature type="helix" evidence="2">
    <location>
        <begin position="68"/>
        <end position="70"/>
    </location>
</feature>
<feature type="strand" evidence="2">
    <location>
        <begin position="77"/>
        <end position="84"/>
    </location>
</feature>
<feature type="helix" evidence="2">
    <location>
        <begin position="86"/>
        <end position="94"/>
    </location>
</feature>
<feature type="helix" evidence="2">
    <location>
        <begin position="100"/>
        <end position="110"/>
    </location>
</feature>
<feature type="strand" evidence="2">
    <location>
        <begin position="114"/>
        <end position="119"/>
    </location>
</feature>
<feature type="helix" evidence="2">
    <location>
        <begin position="126"/>
        <end position="137"/>
    </location>
</feature>
<feature type="helix" evidence="2">
    <location>
        <begin position="156"/>
        <end position="171"/>
    </location>
</feature>
<dbReference type="EC" id="2.5.1.129" evidence="1"/>
<dbReference type="EMBL" id="L77117">
    <property type="protein sequence ID" value="AAB98082.1"/>
    <property type="molecule type" value="Genomic_DNA"/>
</dbReference>
<dbReference type="PIR" id="F64312">
    <property type="entry name" value="F64312"/>
</dbReference>
<dbReference type="RefSeq" id="WP_010869594.1">
    <property type="nucleotide sequence ID" value="NC_000909.1"/>
</dbReference>
<dbReference type="PDB" id="6M8V">
    <property type="method" value="X-ray"/>
    <property type="resolution" value="2.22 A"/>
    <property type="chains" value="A=1-184"/>
</dbReference>
<dbReference type="PDBsum" id="6M8V"/>
<dbReference type="SMR" id="Q57566"/>
<dbReference type="FunCoup" id="Q57566">
    <property type="interactions" value="133"/>
</dbReference>
<dbReference type="STRING" id="243232.MJ_0102"/>
<dbReference type="PaxDb" id="243232-MJ_0102"/>
<dbReference type="EnsemblBacteria" id="AAB98082">
    <property type="protein sequence ID" value="AAB98082"/>
    <property type="gene ID" value="MJ_0102"/>
</dbReference>
<dbReference type="GeneID" id="1450941"/>
<dbReference type="KEGG" id="mja:MJ_0102"/>
<dbReference type="eggNOG" id="arCOG01703">
    <property type="taxonomic scope" value="Archaea"/>
</dbReference>
<dbReference type="HOGENOM" id="CLU_074522_0_0_2"/>
<dbReference type="InParanoid" id="Q57566"/>
<dbReference type="OrthoDB" id="9540at2157"/>
<dbReference type="PhylomeDB" id="Q57566"/>
<dbReference type="Proteomes" id="UP000000805">
    <property type="component" value="Chromosome"/>
</dbReference>
<dbReference type="GO" id="GO:0016831">
    <property type="term" value="F:carboxy-lyase activity"/>
    <property type="evidence" value="ECO:0000318"/>
    <property type="project" value="GO_Central"/>
</dbReference>
<dbReference type="GO" id="GO:0106141">
    <property type="term" value="F:flavin prenyltransferase activity"/>
    <property type="evidence" value="ECO:0007669"/>
    <property type="project" value="UniProtKB-EC"/>
</dbReference>
<dbReference type="FunFam" id="3.40.50.1950:FF:000001">
    <property type="entry name" value="Flavin prenyltransferase UbiX"/>
    <property type="match status" value="1"/>
</dbReference>
<dbReference type="Gene3D" id="3.40.50.1950">
    <property type="entry name" value="Flavin prenyltransferase-like"/>
    <property type="match status" value="1"/>
</dbReference>
<dbReference type="HAMAP" id="MF_01984">
    <property type="entry name" value="ubiX_pad"/>
    <property type="match status" value="1"/>
</dbReference>
<dbReference type="InterPro" id="IPR036551">
    <property type="entry name" value="Flavin_trans-like"/>
</dbReference>
<dbReference type="InterPro" id="IPR003382">
    <property type="entry name" value="Flavoprotein"/>
</dbReference>
<dbReference type="InterPro" id="IPR004507">
    <property type="entry name" value="UbiX-like"/>
</dbReference>
<dbReference type="NCBIfam" id="NF004685">
    <property type="entry name" value="PRK06029.1"/>
    <property type="match status" value="1"/>
</dbReference>
<dbReference type="NCBIfam" id="TIGR00421">
    <property type="entry name" value="ubiX_pad"/>
    <property type="match status" value="1"/>
</dbReference>
<dbReference type="PANTHER" id="PTHR43374">
    <property type="entry name" value="FLAVIN PRENYLTRANSFERASE"/>
    <property type="match status" value="1"/>
</dbReference>
<dbReference type="PANTHER" id="PTHR43374:SF1">
    <property type="entry name" value="FLAVIN PRENYLTRANSFERASE PAD1, MITOCHONDRIAL"/>
    <property type="match status" value="1"/>
</dbReference>
<dbReference type="Pfam" id="PF02441">
    <property type="entry name" value="Flavoprotein"/>
    <property type="match status" value="1"/>
</dbReference>
<dbReference type="SUPFAM" id="SSF52507">
    <property type="entry name" value="Homo-oligomeric flavin-containing Cys decarboxylases, HFCD"/>
    <property type="match status" value="1"/>
</dbReference>
<keyword id="KW-0002">3D-structure</keyword>
<keyword id="KW-0285">Flavoprotein</keyword>
<keyword id="KW-0288">FMN</keyword>
<keyword id="KW-0637">Prenyltransferase</keyword>
<keyword id="KW-1185">Reference proteome</keyword>
<keyword id="KW-0808">Transferase</keyword>
<gene>
    <name evidence="1" type="primary">ubiX</name>
    <name type="ordered locus">MJ0102</name>
</gene>
<name>UBIX_METJA</name>
<evidence type="ECO:0000255" key="1">
    <source>
        <dbReference type="HAMAP-Rule" id="MF_01984"/>
    </source>
</evidence>
<evidence type="ECO:0007829" key="2">
    <source>
        <dbReference type="PDB" id="6M8V"/>
    </source>
</evidence>